<protein>
    <recommendedName>
        <fullName>Capsid protein</fullName>
    </recommendedName>
    <alternativeName>
        <fullName>CA1</fullName>
    </alternativeName>
    <alternativeName>
        <fullName>Coat protein</fullName>
    </alternativeName>
</protein>
<feature type="chain" id="PRO_0000222998" description="Capsid protein">
    <location>
        <begin position="1"/>
        <end position="449"/>
    </location>
</feature>
<feature type="region of interest" description="DNA-binding" evidence="1">
    <location>
        <begin position="1"/>
        <end position="43"/>
    </location>
</feature>
<feature type="region of interest" description="Nuclear localization signals" evidence="2">
    <location>
        <begin position="6"/>
        <end position="47"/>
    </location>
</feature>
<organism>
    <name type="scientific">Chicken anemia virus (isolate Japan 82-2)</name>
    <name type="common">CAV</name>
    <dbReference type="NCBI Taxonomy" id="73476"/>
    <lineage>
        <taxon>Viruses</taxon>
        <taxon>Viruses incertae sedis</taxon>
        <taxon>Anelloviridae</taxon>
        <taxon>Gyrovirus</taxon>
        <taxon>Gyrovirus chickenanemia</taxon>
    </lineage>
</organism>
<name>CAPSD_CAV82</name>
<sequence length="449" mass="51690">MERRARRPRGRFYAFRRGRWNHLKRLRRRYKFRHRRRQRYRRRAFRKAFHNPRPGTYSVRLPNPQSTMTIRFQGVIFLTEGLILPKNSTAGGYADHMYGARVAKISVNLKEFLLASMNLTYVSKLGGPIAGELIADGSKSEAAENWPNCCVPLDNNVPSATPSAWWRWALMMMQPTDSCRFFNHPKQMTLQDMGRMFGGWHLFRHIETRFQLLATKNEGSFSPVASLLSQGEYLTRRDDVKYSSDHQNRWRKGGQPMTGGIAYATGKMRPDEQQYPAMPPDPPIITSTTAQGTQVRCMNSTQAWWSWDTYMSFATLTALGAQWSFPPGQRSVSRRSFNHHKARGAGDPKGQRWHTLVPLGTETITDSYMGAPASELDTNFFTLYVAQGTNKSQQYKFGTATYALKEPVMKSDSWAVVRVQSVWQLGNRQRPYPWDVNWANSTMYWGTQP</sequence>
<keyword id="KW-0167">Capsid protein</keyword>
<keyword id="KW-0238">DNA-binding</keyword>
<keyword id="KW-1048">Host nucleus</keyword>
<keyword id="KW-0945">Host-virus interaction</keyword>
<keyword id="KW-0426">Late protein</keyword>
<keyword id="KW-1140">T=1 icosahedral capsid protein</keyword>
<keyword id="KW-1161">Viral attachment to host cell</keyword>
<keyword id="KW-1162">Viral penetration into host cytoplasm</keyword>
<keyword id="KW-1163">Viral penetration into host nucleus</keyword>
<keyword id="KW-0946">Virion</keyword>
<keyword id="KW-1164">Virus endocytosis by host</keyword>
<keyword id="KW-1160">Virus entry into host cell</keyword>
<reference key="1">
    <citation type="journal article" date="1995" name="Virology">
        <title>Gene organization of chicken anemia virus.</title>
        <authorList>
            <person name="Kato A."/>
            <person name="Fujino M."/>
            <person name="Nakamura T."/>
            <person name="Ishihama A."/>
            <person name="Otaki Y."/>
        </authorList>
    </citation>
    <scope>NUCLEOTIDE SEQUENCE [GENOMIC DNA]</scope>
</reference>
<gene>
    <name type="primary">VP1</name>
</gene>
<accession>P54090</accession>
<evidence type="ECO:0000250" key="1"/>
<evidence type="ECO:0000255" key="2"/>
<evidence type="ECO:0000305" key="3"/>
<proteinExistence type="evidence at transcript level"/>
<comment type="function">
    <text evidence="1">Self-assembles to form the virion icosahedral capsid with a T=1 symmetry. This very small capsid (25 nm in diameter) allows the virus to be very stable in the environment and resistant to some disinfectants, including detergents. Essential for the initial attachment to host receptors. After attachment, the virus is endocytosed and traffics to the nucleus. The capsid protein binds and transports the viral genome and Rep across the nuclear envelope (By similarity).</text>
</comment>
<comment type="subunit">
    <text evidence="1 3">Homomultimer (Potential). Interacts with Rep; this interaction relocates Rep into the nucleus (By similarity).</text>
</comment>
<comment type="subcellular location">
    <subcellularLocation>
        <location evidence="1">Host nucleus</location>
    </subcellularLocation>
    <subcellularLocation>
        <location evidence="3">Virion</location>
    </subcellularLocation>
</comment>
<comment type="induction">
    <text>VP1 and VP2 are detected 12 hours post infection, while VP3 only after 24 hours.</text>
</comment>
<comment type="similarity">
    <text evidence="3">Belongs to the gyrovirus capsid protein family.</text>
</comment>
<dbReference type="EMBL" id="D31965">
    <property type="protein sequence ID" value="BAA06734.1"/>
    <property type="molecule type" value="Genomic_DNA"/>
</dbReference>
<dbReference type="Proteomes" id="UP000008443">
    <property type="component" value="Genome"/>
</dbReference>
<dbReference type="GO" id="GO:0043657">
    <property type="term" value="C:host cell"/>
    <property type="evidence" value="ECO:0007669"/>
    <property type="project" value="GOC"/>
</dbReference>
<dbReference type="GO" id="GO:0042025">
    <property type="term" value="C:host cell nucleus"/>
    <property type="evidence" value="ECO:0007669"/>
    <property type="project" value="UniProtKB-SubCell"/>
</dbReference>
<dbReference type="GO" id="GO:0039615">
    <property type="term" value="C:T=1 icosahedral viral capsid"/>
    <property type="evidence" value="ECO:0007669"/>
    <property type="project" value="UniProtKB-KW"/>
</dbReference>
<dbReference type="GO" id="GO:0003677">
    <property type="term" value="F:DNA binding"/>
    <property type="evidence" value="ECO:0007669"/>
    <property type="project" value="UniProtKB-KW"/>
</dbReference>
<dbReference type="GO" id="GO:0075509">
    <property type="term" value="P:endocytosis involved in viral entry into host cell"/>
    <property type="evidence" value="ECO:0007669"/>
    <property type="project" value="UniProtKB-KW"/>
</dbReference>
<dbReference type="GO" id="GO:0075732">
    <property type="term" value="P:viral penetration into host nucleus"/>
    <property type="evidence" value="ECO:0007669"/>
    <property type="project" value="UniProtKB-KW"/>
</dbReference>
<dbReference type="GO" id="GO:0019062">
    <property type="term" value="P:virion attachment to host cell"/>
    <property type="evidence" value="ECO:0007669"/>
    <property type="project" value="UniProtKB-KW"/>
</dbReference>
<dbReference type="InterPro" id="IPR007291">
    <property type="entry name" value="Capsid_protein"/>
</dbReference>
<dbReference type="Pfam" id="PF04162">
    <property type="entry name" value="Gyro_capsid"/>
    <property type="match status" value="1"/>
</dbReference>
<organismHost>
    <name type="scientific">Gallus gallus</name>
    <name type="common">Chicken</name>
    <dbReference type="NCBI Taxonomy" id="9031"/>
</organismHost>